<evidence type="ECO:0000255" key="1">
    <source>
        <dbReference type="HAMAP-Rule" id="MF_00539"/>
    </source>
</evidence>
<evidence type="ECO:0000256" key="2">
    <source>
        <dbReference type="SAM" id="MobiDB-lite"/>
    </source>
</evidence>
<evidence type="ECO:0000305" key="3"/>
<keyword id="KW-0687">Ribonucleoprotein</keyword>
<keyword id="KW-0689">Ribosomal protein</keyword>
<comment type="similarity">
    <text evidence="1">Belongs to the bacterial ribosomal protein bL27 family.</text>
</comment>
<proteinExistence type="inferred from homology"/>
<organism>
    <name type="scientific">Yersinia pestis (strain Pestoides F)</name>
    <dbReference type="NCBI Taxonomy" id="386656"/>
    <lineage>
        <taxon>Bacteria</taxon>
        <taxon>Pseudomonadati</taxon>
        <taxon>Pseudomonadota</taxon>
        <taxon>Gammaproteobacteria</taxon>
        <taxon>Enterobacterales</taxon>
        <taxon>Yersiniaceae</taxon>
        <taxon>Yersinia</taxon>
    </lineage>
</organism>
<dbReference type="EMBL" id="CP000668">
    <property type="protein sequence ID" value="ABP41910.1"/>
    <property type="molecule type" value="Genomic_DNA"/>
</dbReference>
<dbReference type="RefSeq" id="WP_002210179.1">
    <property type="nucleotide sequence ID" value="NZ_CP009715.1"/>
</dbReference>
<dbReference type="SMR" id="A4TRJ8"/>
<dbReference type="GeneID" id="97457883"/>
<dbReference type="KEGG" id="ypp:YPDSF_3560"/>
<dbReference type="PATRIC" id="fig|386656.14.peg.216"/>
<dbReference type="GO" id="GO:0022625">
    <property type="term" value="C:cytosolic large ribosomal subunit"/>
    <property type="evidence" value="ECO:0007669"/>
    <property type="project" value="TreeGrafter"/>
</dbReference>
<dbReference type="GO" id="GO:0003735">
    <property type="term" value="F:structural constituent of ribosome"/>
    <property type="evidence" value="ECO:0007669"/>
    <property type="project" value="InterPro"/>
</dbReference>
<dbReference type="GO" id="GO:0006412">
    <property type="term" value="P:translation"/>
    <property type="evidence" value="ECO:0007669"/>
    <property type="project" value="UniProtKB-UniRule"/>
</dbReference>
<dbReference type="FunFam" id="2.40.50.100:FF:000001">
    <property type="entry name" value="50S ribosomal protein L27"/>
    <property type="match status" value="1"/>
</dbReference>
<dbReference type="Gene3D" id="2.40.50.100">
    <property type="match status" value="1"/>
</dbReference>
<dbReference type="HAMAP" id="MF_00539">
    <property type="entry name" value="Ribosomal_bL27"/>
    <property type="match status" value="1"/>
</dbReference>
<dbReference type="InterPro" id="IPR001684">
    <property type="entry name" value="Ribosomal_bL27"/>
</dbReference>
<dbReference type="InterPro" id="IPR018261">
    <property type="entry name" value="Ribosomal_bL27_CS"/>
</dbReference>
<dbReference type="NCBIfam" id="TIGR00062">
    <property type="entry name" value="L27"/>
    <property type="match status" value="1"/>
</dbReference>
<dbReference type="PANTHER" id="PTHR15893:SF0">
    <property type="entry name" value="LARGE RIBOSOMAL SUBUNIT PROTEIN BL27M"/>
    <property type="match status" value="1"/>
</dbReference>
<dbReference type="PANTHER" id="PTHR15893">
    <property type="entry name" value="RIBOSOMAL PROTEIN L27"/>
    <property type="match status" value="1"/>
</dbReference>
<dbReference type="Pfam" id="PF01016">
    <property type="entry name" value="Ribosomal_L27"/>
    <property type="match status" value="1"/>
</dbReference>
<dbReference type="PRINTS" id="PR00063">
    <property type="entry name" value="RIBOSOMALL27"/>
</dbReference>
<dbReference type="SUPFAM" id="SSF110324">
    <property type="entry name" value="Ribosomal L27 protein-like"/>
    <property type="match status" value="1"/>
</dbReference>
<dbReference type="PROSITE" id="PS00831">
    <property type="entry name" value="RIBOSOMAL_L27"/>
    <property type="match status" value="1"/>
</dbReference>
<gene>
    <name evidence="1" type="primary">rpmA</name>
    <name type="ordered locus">YPDSF_3560</name>
</gene>
<protein>
    <recommendedName>
        <fullName evidence="1">Large ribosomal subunit protein bL27</fullName>
    </recommendedName>
    <alternativeName>
        <fullName evidence="3">50S ribosomal protein L27</fullName>
    </alternativeName>
</protein>
<name>RL27_YERPP</name>
<reference key="1">
    <citation type="submission" date="2007-02" db="EMBL/GenBank/DDBJ databases">
        <title>Complete sequence of chromosome of Yersinia pestis Pestoides F.</title>
        <authorList>
            <consortium name="US DOE Joint Genome Institute"/>
            <person name="Copeland A."/>
            <person name="Lucas S."/>
            <person name="Lapidus A."/>
            <person name="Barry K."/>
            <person name="Detter J.C."/>
            <person name="Glavina del Rio T."/>
            <person name="Hammon N."/>
            <person name="Israni S."/>
            <person name="Dalin E."/>
            <person name="Tice H."/>
            <person name="Pitluck S."/>
            <person name="Di Bartolo G."/>
            <person name="Chain P."/>
            <person name="Malfatti S."/>
            <person name="Shin M."/>
            <person name="Vergez L."/>
            <person name="Schmutz J."/>
            <person name="Larimer F."/>
            <person name="Land M."/>
            <person name="Hauser L."/>
            <person name="Worsham P."/>
            <person name="Chu M."/>
            <person name="Bearden S."/>
            <person name="Garcia E."/>
            <person name="Richardson P."/>
        </authorList>
    </citation>
    <scope>NUCLEOTIDE SEQUENCE [LARGE SCALE GENOMIC DNA]</scope>
    <source>
        <strain>Pestoides F</strain>
    </source>
</reference>
<sequence length="85" mass="9124">MAHKKAGGSTRNGRDSESKRLGVKRFGGEAVLAGSIIVRQRGTKFHAGINVGCGKDHTLFALADGKVKFEVKGPKNRKFISIEAE</sequence>
<feature type="chain" id="PRO_1000017652" description="Large ribosomal subunit protein bL27">
    <location>
        <begin position="1"/>
        <end position="85"/>
    </location>
</feature>
<feature type="region of interest" description="Disordered" evidence="2">
    <location>
        <begin position="1"/>
        <end position="20"/>
    </location>
</feature>
<accession>A4TRJ8</accession>